<keyword id="KW-1185">Reference proteome</keyword>
<gene>
    <name type="ordered locus">MG096</name>
</gene>
<organism>
    <name type="scientific">Mycoplasma genitalium (strain ATCC 33530 / DSM 19775 / NCTC 10195 / G37)</name>
    <name type="common">Mycoplasmoides genitalium</name>
    <dbReference type="NCBI Taxonomy" id="243273"/>
    <lineage>
        <taxon>Bacteria</taxon>
        <taxon>Bacillati</taxon>
        <taxon>Mycoplasmatota</taxon>
        <taxon>Mycoplasmoidales</taxon>
        <taxon>Mycoplasmoidaceae</taxon>
        <taxon>Mycoplasmoides</taxon>
    </lineage>
</organism>
<proteinExistence type="inferred from homology"/>
<dbReference type="EMBL" id="L43967">
    <property type="protein sequence ID" value="AAC71314.1"/>
    <property type="molecule type" value="Genomic_DNA"/>
</dbReference>
<dbReference type="EMBL" id="U01713">
    <property type="protein sequence ID" value="AAC43186.1"/>
    <property type="molecule type" value="Unassigned_DNA"/>
</dbReference>
<dbReference type="EMBL" id="U01762">
    <property type="protein sequence ID" value="AAD10577.1"/>
    <property type="molecule type" value="Genomic_DNA"/>
</dbReference>
<dbReference type="RefSeq" id="WP_010869330.1">
    <property type="nucleotide sequence ID" value="NC_000908.2"/>
</dbReference>
<dbReference type="SMR" id="P47342"/>
<dbReference type="STRING" id="243273.MG_096"/>
<dbReference type="GeneID" id="88282219"/>
<dbReference type="KEGG" id="mge:MG_096"/>
<dbReference type="eggNOG" id="COG4942">
    <property type="taxonomic scope" value="Bacteria"/>
</dbReference>
<dbReference type="HOGENOM" id="CLU_029253_0_0_14"/>
<dbReference type="InParanoid" id="P47342"/>
<dbReference type="OrthoDB" id="403320at2"/>
<dbReference type="BioCyc" id="MGEN243273:G1GJ2-108-MONOMER"/>
<dbReference type="Proteomes" id="UP000000807">
    <property type="component" value="Chromosome"/>
</dbReference>
<dbReference type="InterPro" id="IPR004306">
    <property type="entry name" value="DUF237"/>
</dbReference>
<dbReference type="InterPro" id="IPR004319">
    <property type="entry name" value="DUF240"/>
</dbReference>
<dbReference type="Pfam" id="PF03072">
    <property type="entry name" value="DUF237"/>
    <property type="match status" value="1"/>
</dbReference>
<dbReference type="Pfam" id="PF03086">
    <property type="entry name" value="DUF240"/>
    <property type="match status" value="1"/>
</dbReference>
<sequence length="650" mass="74803">MKTQKNIFKVKALLLSLFSAAVTITIFALPIFANNGSKTDLGLLSKNSADFLGSSKRSLAGFDTPFSPDNLQYLEKETDYDQNFKSFTEKFKDEKITNNQLGIVDIYNLFSGFHKSVKSTVDLMNQLQKQVEAANAIFPVDDAFVKLPKVPTELFKLVDDNVFPKLNPKGLNISDNIAALFERYNLKSIELKNFDLAFLRKADVIIKDKVRYNFEMQMQFQTVYVGGGNTVINLDFTLKAQTVNFANLQDLQNTFVKVGNDLSTQLFWIPTVNKLTDNAGNDLTHIAKTVIGESFFQTNVNLAKSVIEYDKVQPLVKQAFEERVLTPFKKEREAAKKAYEEEQRRLEEERKRQLEELRRREAEEKRKAEEAKRNQEKARREREAYEKSFNSFKDFKFYWLTKGKDVTKKADLIDALKTAIATPAYRNRTFSLLIKGFASGVERYFNANKNDKELKKLAFGEKGIQFPRADAGVNGLYMSNFLRHELTSKAKFSLNLKDIKVENTVEDTQLYWKDNGIHLKQANPYKFNLNIKIKYNGWYNVHWWNWLPAKILGIPTDWSGEMNLTFVVNGDLSEIVDKHDYPGTFFQFTDKNELLFTLAVREQIKVDNNHFMGLLKSQNLHNLQLASGATKPPVVDLASYFHFVLLTEKS</sequence>
<feature type="chain" id="PRO_0000215245" description="Uncharacterized protein MG096">
    <location>
        <begin position="1"/>
        <end position="650"/>
    </location>
</feature>
<evidence type="ECO:0000305" key="1"/>
<protein>
    <recommendedName>
        <fullName>Uncharacterized protein MG096</fullName>
    </recommendedName>
</protein>
<accession>P47342</accession>
<accession>Q49188</accession>
<name>Y096_MYCGE</name>
<comment type="similarity">
    <text evidence="1">Belongs to the MG032/MG096/MG288 family.</text>
</comment>
<reference key="1">
    <citation type="journal article" date="1995" name="Science">
        <title>The minimal gene complement of Mycoplasma genitalium.</title>
        <authorList>
            <person name="Fraser C.M."/>
            <person name="Gocayne J.D."/>
            <person name="White O."/>
            <person name="Adams M.D."/>
            <person name="Clayton R.A."/>
            <person name="Fleischmann R.D."/>
            <person name="Bult C.J."/>
            <person name="Kerlavage A.R."/>
            <person name="Sutton G.G."/>
            <person name="Kelley J.M."/>
            <person name="Fritchman J.L."/>
            <person name="Weidman J.F."/>
            <person name="Small K.V."/>
            <person name="Sandusky M."/>
            <person name="Fuhrmann J.L."/>
            <person name="Nguyen D.T."/>
            <person name="Utterback T.R."/>
            <person name="Saudek D.M."/>
            <person name="Phillips C.A."/>
            <person name="Merrick J.M."/>
            <person name="Tomb J.-F."/>
            <person name="Dougherty B.A."/>
            <person name="Bott K.F."/>
            <person name="Hu P.-C."/>
            <person name="Lucier T.S."/>
            <person name="Peterson S.N."/>
            <person name="Smith H.O."/>
            <person name="Hutchison C.A. III"/>
            <person name="Venter J.C."/>
        </authorList>
    </citation>
    <scope>NUCLEOTIDE SEQUENCE [LARGE SCALE GENOMIC DNA]</scope>
    <source>
        <strain>ATCC 33530 / DSM 19775 / NCTC 10195 / G37</strain>
    </source>
</reference>
<reference key="2">
    <citation type="submission" date="1998-10" db="EMBL/GenBank/DDBJ databases">
        <authorList>
            <person name="Fraser C.M."/>
            <person name="Gocayne J.D."/>
            <person name="White O."/>
            <person name="Adams M.D."/>
            <person name="Clayton R.A."/>
            <person name="Fleischmann R.D."/>
            <person name="Bult C.J."/>
            <person name="Kerlavage A.R."/>
            <person name="Sutton G.G."/>
            <person name="Kelley J.M."/>
            <person name="Fritchman J.L."/>
            <person name="Weidman J.F."/>
            <person name="Small K.V."/>
            <person name="Sandusky M."/>
            <person name="Fuhrmann J.L."/>
            <person name="Nguyen D.T."/>
            <person name="Utterback T.R."/>
            <person name="Saudek D.M."/>
            <person name="Phillips C.A."/>
            <person name="Merrick J.M."/>
            <person name="Tomb J.-F."/>
            <person name="Dougherty B.A."/>
            <person name="Bott K.F."/>
            <person name="Hu P.-C."/>
            <person name="Lucier T.S."/>
            <person name="Peterson S.N."/>
            <person name="Smith H.O."/>
            <person name="Hutchison C.A. III"/>
            <person name="Venter J.C."/>
        </authorList>
    </citation>
    <scope>SEQUENCE REVISION</scope>
</reference>
<reference key="3">
    <citation type="journal article" date="1993" name="J. Bacteriol.">
        <title>A survey of the Mycoplasma genitalium genome by using random sequencing.</title>
        <authorList>
            <person name="Peterson S.N."/>
            <person name="Hu P.-C."/>
            <person name="Bott K.F."/>
            <person name="Hutchison C.A. III"/>
        </authorList>
    </citation>
    <scope>PARTIAL NUCLEOTIDE SEQUENCE [GENOMIC DNA]</scope>
    <source>
        <strain>ATCC 33530 / DSM 19775 / NCTC 10195 / G37</strain>
    </source>
</reference>